<dbReference type="EC" id="2.4.1.18" evidence="1"/>
<dbReference type="EMBL" id="CP001176">
    <property type="protein sequence ID" value="ACK61613.1"/>
    <property type="molecule type" value="Genomic_DNA"/>
</dbReference>
<dbReference type="RefSeq" id="WP_000111402.1">
    <property type="nucleotide sequence ID" value="NC_011725.1"/>
</dbReference>
<dbReference type="SMR" id="B7HBC7"/>
<dbReference type="CAZy" id="CBM48">
    <property type="family name" value="Carbohydrate-Binding Module Family 48"/>
</dbReference>
<dbReference type="CAZy" id="GH13">
    <property type="family name" value="Glycoside Hydrolase Family 13"/>
</dbReference>
<dbReference type="KEGG" id="bcb:BCB4264_A4999"/>
<dbReference type="HOGENOM" id="CLU_004245_4_0_9"/>
<dbReference type="UniPathway" id="UPA00164"/>
<dbReference type="Proteomes" id="UP000007096">
    <property type="component" value="Chromosome"/>
</dbReference>
<dbReference type="GO" id="GO:0005829">
    <property type="term" value="C:cytosol"/>
    <property type="evidence" value="ECO:0007669"/>
    <property type="project" value="TreeGrafter"/>
</dbReference>
<dbReference type="GO" id="GO:0003844">
    <property type="term" value="F:1,4-alpha-glucan branching enzyme activity"/>
    <property type="evidence" value="ECO:0007669"/>
    <property type="project" value="UniProtKB-UniRule"/>
</dbReference>
<dbReference type="GO" id="GO:0043169">
    <property type="term" value="F:cation binding"/>
    <property type="evidence" value="ECO:0007669"/>
    <property type="project" value="InterPro"/>
</dbReference>
<dbReference type="GO" id="GO:0004553">
    <property type="term" value="F:hydrolase activity, hydrolyzing O-glycosyl compounds"/>
    <property type="evidence" value="ECO:0007669"/>
    <property type="project" value="InterPro"/>
</dbReference>
<dbReference type="GO" id="GO:0005978">
    <property type="term" value="P:glycogen biosynthetic process"/>
    <property type="evidence" value="ECO:0007669"/>
    <property type="project" value="UniProtKB-UniRule"/>
</dbReference>
<dbReference type="CDD" id="cd11322">
    <property type="entry name" value="AmyAc_Glg_BE"/>
    <property type="match status" value="1"/>
</dbReference>
<dbReference type="CDD" id="cd02855">
    <property type="entry name" value="E_set_GBE_prok_N"/>
    <property type="match status" value="1"/>
</dbReference>
<dbReference type="FunFam" id="2.60.40.10:FF:000169">
    <property type="entry name" value="1,4-alpha-glucan branching enzyme GlgB"/>
    <property type="match status" value="1"/>
</dbReference>
<dbReference type="FunFam" id="2.60.40.1180:FF:000002">
    <property type="entry name" value="1,4-alpha-glucan branching enzyme GlgB"/>
    <property type="match status" value="1"/>
</dbReference>
<dbReference type="FunFam" id="3.20.20.80:FF:000003">
    <property type="entry name" value="1,4-alpha-glucan branching enzyme GlgB"/>
    <property type="match status" value="1"/>
</dbReference>
<dbReference type="Gene3D" id="3.20.20.80">
    <property type="entry name" value="Glycosidases"/>
    <property type="match status" value="1"/>
</dbReference>
<dbReference type="Gene3D" id="2.60.40.1180">
    <property type="entry name" value="Golgi alpha-mannosidase II"/>
    <property type="match status" value="1"/>
</dbReference>
<dbReference type="Gene3D" id="2.60.40.10">
    <property type="entry name" value="Immunoglobulins"/>
    <property type="match status" value="1"/>
</dbReference>
<dbReference type="HAMAP" id="MF_00685">
    <property type="entry name" value="GlgB"/>
    <property type="match status" value="1"/>
</dbReference>
<dbReference type="InterPro" id="IPR006048">
    <property type="entry name" value="A-amylase/branching_C"/>
</dbReference>
<dbReference type="InterPro" id="IPR037439">
    <property type="entry name" value="Branching_enzy"/>
</dbReference>
<dbReference type="InterPro" id="IPR006407">
    <property type="entry name" value="GlgB"/>
</dbReference>
<dbReference type="InterPro" id="IPR044143">
    <property type="entry name" value="GlgB_N_E_set_prok"/>
</dbReference>
<dbReference type="InterPro" id="IPR006047">
    <property type="entry name" value="Glyco_hydro_13_cat_dom"/>
</dbReference>
<dbReference type="InterPro" id="IPR004193">
    <property type="entry name" value="Glyco_hydro_13_N"/>
</dbReference>
<dbReference type="InterPro" id="IPR013780">
    <property type="entry name" value="Glyco_hydro_b"/>
</dbReference>
<dbReference type="InterPro" id="IPR017853">
    <property type="entry name" value="Glycoside_hydrolase_SF"/>
</dbReference>
<dbReference type="InterPro" id="IPR013783">
    <property type="entry name" value="Ig-like_fold"/>
</dbReference>
<dbReference type="NCBIfam" id="TIGR01515">
    <property type="entry name" value="branching_enzym"/>
    <property type="match status" value="1"/>
</dbReference>
<dbReference type="NCBIfam" id="NF003811">
    <property type="entry name" value="PRK05402.1"/>
    <property type="match status" value="1"/>
</dbReference>
<dbReference type="NCBIfam" id="NF008967">
    <property type="entry name" value="PRK12313.1"/>
    <property type="match status" value="1"/>
</dbReference>
<dbReference type="PANTHER" id="PTHR43651">
    <property type="entry name" value="1,4-ALPHA-GLUCAN-BRANCHING ENZYME"/>
    <property type="match status" value="1"/>
</dbReference>
<dbReference type="PANTHER" id="PTHR43651:SF3">
    <property type="entry name" value="1,4-ALPHA-GLUCAN-BRANCHING ENZYME"/>
    <property type="match status" value="1"/>
</dbReference>
<dbReference type="Pfam" id="PF00128">
    <property type="entry name" value="Alpha-amylase"/>
    <property type="match status" value="2"/>
</dbReference>
<dbReference type="Pfam" id="PF02806">
    <property type="entry name" value="Alpha-amylase_C"/>
    <property type="match status" value="1"/>
</dbReference>
<dbReference type="Pfam" id="PF02922">
    <property type="entry name" value="CBM_48"/>
    <property type="match status" value="1"/>
</dbReference>
<dbReference type="PIRSF" id="PIRSF000463">
    <property type="entry name" value="GlgB"/>
    <property type="match status" value="1"/>
</dbReference>
<dbReference type="SMART" id="SM00642">
    <property type="entry name" value="Aamy"/>
    <property type="match status" value="1"/>
</dbReference>
<dbReference type="SUPFAM" id="SSF51445">
    <property type="entry name" value="(Trans)glycosidases"/>
    <property type="match status" value="1"/>
</dbReference>
<dbReference type="SUPFAM" id="SSF51011">
    <property type="entry name" value="Glycosyl hydrolase domain"/>
    <property type="match status" value="1"/>
</dbReference>
<evidence type="ECO:0000255" key="1">
    <source>
        <dbReference type="HAMAP-Rule" id="MF_00685"/>
    </source>
</evidence>
<evidence type="ECO:0000256" key="2">
    <source>
        <dbReference type="SAM" id="MobiDB-lite"/>
    </source>
</evidence>
<keyword id="KW-0119">Carbohydrate metabolism</keyword>
<keyword id="KW-0320">Glycogen biosynthesis</keyword>
<keyword id="KW-0321">Glycogen metabolism</keyword>
<keyword id="KW-0328">Glycosyltransferase</keyword>
<keyword id="KW-0808">Transferase</keyword>
<reference key="1">
    <citation type="submission" date="2008-10" db="EMBL/GenBank/DDBJ databases">
        <title>Genome sequence of Bacillus cereus B4264.</title>
        <authorList>
            <person name="Dodson R.J."/>
            <person name="Durkin A.S."/>
            <person name="Rosovitz M.J."/>
            <person name="Rasko D.A."/>
            <person name="Hoffmaster A."/>
            <person name="Ravel J."/>
            <person name="Sutton G."/>
        </authorList>
    </citation>
    <scope>NUCLEOTIDE SEQUENCE [LARGE SCALE GENOMIC DNA]</scope>
    <source>
        <strain>B4264</strain>
    </source>
</reference>
<name>GLGB_BACC4</name>
<gene>
    <name evidence="1" type="primary">glgB</name>
    <name type="ordered locus">BCB4264_A4999</name>
</gene>
<protein>
    <recommendedName>
        <fullName evidence="1">1,4-alpha-glucan branching enzyme GlgB</fullName>
        <ecNumber evidence="1">2.4.1.18</ecNumber>
    </recommendedName>
    <alternativeName>
        <fullName evidence="1">1,4-alpha-D-glucan:1,4-alpha-D-glucan 6-glucosyl-transferase</fullName>
    </alternativeName>
    <alternativeName>
        <fullName evidence="1">Alpha-(1-&gt;4)-glucan branching enzyme</fullName>
    </alternativeName>
    <alternativeName>
        <fullName evidence="1">Glycogen branching enzyme</fullName>
        <shortName evidence="1">BE</shortName>
    </alternativeName>
</protein>
<sequence>MSVINCEEVKRDEFHTEKYYESYNIFGAHVVTEDEIQGVRFTVWAPHAKAMSVVGDFNEWDYEQHKMLQVTEEGIWSLFIPHIEEGEIYKYAIETLAGDVILKADPYAVYAEVRPNTASVVFDIKGYEWNDKNWIRKKKKKSIYKEAMTVYELHFGSWKKKEDGTLYSYREMVEELIPYVVEHQFTHIEIMPLVEHPYDRSWGYQGTGYYAATSRFGTPHDLMHFVDECHKYGIGVILDWVPGHFCKDAHGLYLFDGTPTYEYKDKDVQENPVWGTVNFDLGKREVRNFLISNALFWMRYFHIDGFRVDAVANMLYWNKEGQEQSNEHAVSFLRELNEAVFAEDEDFLMTAEDSTAWPLVTTPTYEGGLGFNYKWNMGWMNDVLKYMECAPEYRKHIHEKMTFSLLYAYSENFILPLSHDEVVHGKKSLLNKMPGDYWDKFAQLRLLYGYFFTHPGKKLLFMGGEFGQFDEWKDLEDLDWNLHDFEMHRYMHDYFKELIALYKRSKPLWQLDHSPEGFQWIDANNNEQSIFSFIRQGDKQEDALVIVCNFTKATYENYKVGVPDFEYYNEILNSDAQQYGGSGQVNKKRLKTILEPYHNQAAHVEITIPPFGVSILRPVKTRKGSKKQDGSKTKVRSNVTSRGKR</sequence>
<proteinExistence type="inferred from homology"/>
<feature type="chain" id="PRO_1000131809" description="1,4-alpha-glucan branching enzyme GlgB">
    <location>
        <begin position="1"/>
        <end position="645"/>
    </location>
</feature>
<feature type="region of interest" description="Disordered" evidence="2">
    <location>
        <begin position="619"/>
        <end position="645"/>
    </location>
</feature>
<feature type="compositionally biased region" description="Polar residues" evidence="2">
    <location>
        <begin position="636"/>
        <end position="645"/>
    </location>
</feature>
<feature type="active site" description="Nucleophile" evidence="1">
    <location>
        <position position="309"/>
    </location>
</feature>
<feature type="active site" description="Proton donor" evidence="1">
    <location>
        <position position="352"/>
    </location>
</feature>
<organism>
    <name type="scientific">Bacillus cereus (strain B4264)</name>
    <dbReference type="NCBI Taxonomy" id="405532"/>
    <lineage>
        <taxon>Bacteria</taxon>
        <taxon>Bacillati</taxon>
        <taxon>Bacillota</taxon>
        <taxon>Bacilli</taxon>
        <taxon>Bacillales</taxon>
        <taxon>Bacillaceae</taxon>
        <taxon>Bacillus</taxon>
        <taxon>Bacillus cereus group</taxon>
    </lineage>
</organism>
<comment type="function">
    <text evidence="1">Catalyzes the formation of the alpha-1,6-glucosidic linkages in glycogen by scission of a 1,4-alpha-linked oligosaccharide from growing alpha-1,4-glucan chains and the subsequent attachment of the oligosaccharide to the alpha-1,6 position.</text>
</comment>
<comment type="catalytic activity">
    <reaction evidence="1">
        <text>Transfers a segment of a (1-&gt;4)-alpha-D-glucan chain to a primary hydroxy group in a similar glucan chain.</text>
        <dbReference type="EC" id="2.4.1.18"/>
    </reaction>
</comment>
<comment type="pathway">
    <text evidence="1">Glycan biosynthesis; glycogen biosynthesis.</text>
</comment>
<comment type="subunit">
    <text evidence="1">Monomer.</text>
</comment>
<comment type="similarity">
    <text evidence="1">Belongs to the glycosyl hydrolase 13 family. GlgB subfamily.</text>
</comment>
<accession>B7HBC7</accession>